<accession>Q8DDI1</accession>
<name>MNME_VIBVU</name>
<gene>
    <name evidence="1" type="primary">mnmE</name>
    <name evidence="1" type="synonym">thdF</name>
    <name evidence="1" type="synonym">trmE</name>
    <name type="ordered locus">VV1_1008</name>
</gene>
<keyword id="KW-0963">Cytoplasm</keyword>
<keyword id="KW-0342">GTP-binding</keyword>
<keyword id="KW-0378">Hydrolase</keyword>
<keyword id="KW-0460">Magnesium</keyword>
<keyword id="KW-0479">Metal-binding</keyword>
<keyword id="KW-0547">Nucleotide-binding</keyword>
<keyword id="KW-0630">Potassium</keyword>
<keyword id="KW-0819">tRNA processing</keyword>
<evidence type="ECO:0000255" key="1">
    <source>
        <dbReference type="HAMAP-Rule" id="MF_00379"/>
    </source>
</evidence>
<evidence type="ECO:0000305" key="2"/>
<dbReference type="EC" id="3.6.-.-" evidence="1"/>
<dbReference type="EMBL" id="AE016795">
    <property type="protein sequence ID" value="AAO09496.2"/>
    <property type="status" value="ALT_INIT"/>
    <property type="molecule type" value="Genomic_DNA"/>
</dbReference>
<dbReference type="RefSeq" id="WP_013572640.1">
    <property type="nucleotide sequence ID" value="NC_004459.3"/>
</dbReference>
<dbReference type="SMR" id="Q8DDI1"/>
<dbReference type="KEGG" id="vvu:VV1_1008"/>
<dbReference type="HOGENOM" id="CLU_019624_4_1_6"/>
<dbReference type="Proteomes" id="UP000002275">
    <property type="component" value="Chromosome 1"/>
</dbReference>
<dbReference type="GO" id="GO:0005829">
    <property type="term" value="C:cytosol"/>
    <property type="evidence" value="ECO:0007669"/>
    <property type="project" value="TreeGrafter"/>
</dbReference>
<dbReference type="GO" id="GO:0005525">
    <property type="term" value="F:GTP binding"/>
    <property type="evidence" value="ECO:0007669"/>
    <property type="project" value="UniProtKB-UniRule"/>
</dbReference>
<dbReference type="GO" id="GO:0003924">
    <property type="term" value="F:GTPase activity"/>
    <property type="evidence" value="ECO:0007669"/>
    <property type="project" value="UniProtKB-UniRule"/>
</dbReference>
<dbReference type="GO" id="GO:0046872">
    <property type="term" value="F:metal ion binding"/>
    <property type="evidence" value="ECO:0007669"/>
    <property type="project" value="UniProtKB-KW"/>
</dbReference>
<dbReference type="GO" id="GO:0030488">
    <property type="term" value="P:tRNA methylation"/>
    <property type="evidence" value="ECO:0007669"/>
    <property type="project" value="TreeGrafter"/>
</dbReference>
<dbReference type="GO" id="GO:0002098">
    <property type="term" value="P:tRNA wobble uridine modification"/>
    <property type="evidence" value="ECO:0007669"/>
    <property type="project" value="TreeGrafter"/>
</dbReference>
<dbReference type="CDD" id="cd04164">
    <property type="entry name" value="trmE"/>
    <property type="match status" value="1"/>
</dbReference>
<dbReference type="CDD" id="cd14858">
    <property type="entry name" value="TrmE_N"/>
    <property type="match status" value="1"/>
</dbReference>
<dbReference type="FunFam" id="3.30.1360.120:FF:000001">
    <property type="entry name" value="tRNA modification GTPase MnmE"/>
    <property type="match status" value="1"/>
</dbReference>
<dbReference type="FunFam" id="3.40.50.300:FF:000249">
    <property type="entry name" value="tRNA modification GTPase MnmE"/>
    <property type="match status" value="1"/>
</dbReference>
<dbReference type="Gene3D" id="3.40.50.300">
    <property type="entry name" value="P-loop containing nucleotide triphosphate hydrolases"/>
    <property type="match status" value="1"/>
</dbReference>
<dbReference type="Gene3D" id="3.30.1360.120">
    <property type="entry name" value="Probable tRNA modification gtpase trme, domain 1"/>
    <property type="match status" value="1"/>
</dbReference>
<dbReference type="Gene3D" id="1.20.120.430">
    <property type="entry name" value="tRNA modification GTPase MnmE domain 2"/>
    <property type="match status" value="1"/>
</dbReference>
<dbReference type="HAMAP" id="MF_00379">
    <property type="entry name" value="GTPase_MnmE"/>
    <property type="match status" value="1"/>
</dbReference>
<dbReference type="InterPro" id="IPR031168">
    <property type="entry name" value="G_TrmE"/>
</dbReference>
<dbReference type="InterPro" id="IPR006073">
    <property type="entry name" value="GTP-bd"/>
</dbReference>
<dbReference type="InterPro" id="IPR018948">
    <property type="entry name" value="GTP-bd_TrmE_N"/>
</dbReference>
<dbReference type="InterPro" id="IPR004520">
    <property type="entry name" value="GTPase_MnmE"/>
</dbReference>
<dbReference type="InterPro" id="IPR027368">
    <property type="entry name" value="MnmE_dom2"/>
</dbReference>
<dbReference type="InterPro" id="IPR025867">
    <property type="entry name" value="MnmE_helical"/>
</dbReference>
<dbReference type="InterPro" id="IPR027417">
    <property type="entry name" value="P-loop_NTPase"/>
</dbReference>
<dbReference type="InterPro" id="IPR005225">
    <property type="entry name" value="Small_GTP-bd"/>
</dbReference>
<dbReference type="InterPro" id="IPR027266">
    <property type="entry name" value="TrmE/GcvT_dom1"/>
</dbReference>
<dbReference type="NCBIfam" id="TIGR00450">
    <property type="entry name" value="mnmE_trmE_thdF"/>
    <property type="match status" value="1"/>
</dbReference>
<dbReference type="NCBIfam" id="NF003661">
    <property type="entry name" value="PRK05291.1-3"/>
    <property type="match status" value="1"/>
</dbReference>
<dbReference type="NCBIfam" id="TIGR00231">
    <property type="entry name" value="small_GTP"/>
    <property type="match status" value="1"/>
</dbReference>
<dbReference type="PANTHER" id="PTHR42714">
    <property type="entry name" value="TRNA MODIFICATION GTPASE GTPBP3"/>
    <property type="match status" value="1"/>
</dbReference>
<dbReference type="PANTHER" id="PTHR42714:SF2">
    <property type="entry name" value="TRNA MODIFICATION GTPASE GTPBP3, MITOCHONDRIAL"/>
    <property type="match status" value="1"/>
</dbReference>
<dbReference type="Pfam" id="PF01926">
    <property type="entry name" value="MMR_HSR1"/>
    <property type="match status" value="1"/>
</dbReference>
<dbReference type="Pfam" id="PF12631">
    <property type="entry name" value="MnmE_helical"/>
    <property type="match status" value="1"/>
</dbReference>
<dbReference type="Pfam" id="PF10396">
    <property type="entry name" value="TrmE_N"/>
    <property type="match status" value="1"/>
</dbReference>
<dbReference type="SUPFAM" id="SSF52540">
    <property type="entry name" value="P-loop containing nucleoside triphosphate hydrolases"/>
    <property type="match status" value="1"/>
</dbReference>
<dbReference type="SUPFAM" id="SSF116878">
    <property type="entry name" value="TrmE connector domain"/>
    <property type="match status" value="1"/>
</dbReference>
<dbReference type="PROSITE" id="PS51709">
    <property type="entry name" value="G_TRME"/>
    <property type="match status" value="1"/>
</dbReference>
<proteinExistence type="inferred from homology"/>
<comment type="function">
    <text evidence="1">Exhibits a very high intrinsic GTPase hydrolysis rate. Involved in the addition of a carboxymethylaminomethyl (cmnm) group at the wobble position (U34) of certain tRNAs, forming tRNA-cmnm(5)s(2)U34.</text>
</comment>
<comment type="cofactor">
    <cofactor evidence="1">
        <name>K(+)</name>
        <dbReference type="ChEBI" id="CHEBI:29103"/>
    </cofactor>
    <text evidence="1">Binds 1 potassium ion per subunit.</text>
</comment>
<comment type="subunit">
    <text evidence="1">Homodimer. Heterotetramer of two MnmE and two MnmG subunits.</text>
</comment>
<comment type="subcellular location">
    <subcellularLocation>
        <location evidence="1">Cytoplasm</location>
    </subcellularLocation>
</comment>
<comment type="similarity">
    <text evidence="1">Belongs to the TRAFAC class TrmE-Era-EngA-EngB-Septin-like GTPase superfamily. TrmE GTPase family.</text>
</comment>
<comment type="sequence caution" evidence="2">
    <conflict type="erroneous initiation">
        <sequence resource="EMBL-CDS" id="AAO09496"/>
    </conflict>
    <text>Extended N-terminus.</text>
</comment>
<organism>
    <name type="scientific">Vibrio vulnificus (strain CMCP6)</name>
    <dbReference type="NCBI Taxonomy" id="216895"/>
    <lineage>
        <taxon>Bacteria</taxon>
        <taxon>Pseudomonadati</taxon>
        <taxon>Pseudomonadota</taxon>
        <taxon>Gammaproteobacteria</taxon>
        <taxon>Vibrionales</taxon>
        <taxon>Vibrionaceae</taxon>
        <taxon>Vibrio</taxon>
    </lineage>
</organism>
<sequence length="453" mass="49308">MTTDTIVAQATAPGRGGVGIIRVSGPQAAQVALEVTGKTLKARYAEYLPFKAQDGSELDQGIALFFPNPHSFTGEDVLELQGHGGPVVMDMLIKRILTISGVRPARPGEFSERAFLNDKMDLTQAEAIADLIDASSEEAAKSALQSLQGQFSKRIHTLVESLIHLRIYVEAAIDFPEEEIDFLADGKVAGDLQAIIDNLDAVRKEANQGAIMREGMKVVIAGRPNAGKSSLLNALSGKDSAIVTDIAGTTRDVLREHIHIDGMPLHIIDTAGLRDASDEVEKIGIERAWDEIRQADRVLFMVDGTTTDATDPKEIWPDFIDRLPEQIGITVIRNKADQTQESLGICHVSQPTLIRLSAKTGQGVDALRNHLKECMGFSGNSEGGFMARRRHLDALQRAAEHLLIGQEQLEGYMAGEILAEELRIAQQHLNEITGEFSSDDLLGRIFSSFCIGK</sequence>
<protein>
    <recommendedName>
        <fullName evidence="1">tRNA modification GTPase MnmE</fullName>
        <ecNumber evidence="1">3.6.-.-</ecNumber>
    </recommendedName>
</protein>
<reference key="1">
    <citation type="submission" date="2002-12" db="EMBL/GenBank/DDBJ databases">
        <title>Complete genome sequence of Vibrio vulnificus CMCP6.</title>
        <authorList>
            <person name="Rhee J.H."/>
            <person name="Kim S.Y."/>
            <person name="Chung S.S."/>
            <person name="Kim J.J."/>
            <person name="Moon Y.H."/>
            <person name="Jeong H."/>
            <person name="Choy H.E."/>
        </authorList>
    </citation>
    <scope>NUCLEOTIDE SEQUENCE [LARGE SCALE GENOMIC DNA]</scope>
    <source>
        <strain>CMCP6</strain>
    </source>
</reference>
<feature type="chain" id="PRO_0000188945" description="tRNA modification GTPase MnmE">
    <location>
        <begin position="1"/>
        <end position="453"/>
    </location>
</feature>
<feature type="domain" description="TrmE-type G">
    <location>
        <begin position="215"/>
        <end position="376"/>
    </location>
</feature>
<feature type="binding site" evidence="1">
    <location>
        <position position="22"/>
    </location>
    <ligand>
        <name>(6S)-5-formyl-5,6,7,8-tetrahydrofolate</name>
        <dbReference type="ChEBI" id="CHEBI:57457"/>
    </ligand>
</feature>
<feature type="binding site" evidence="1">
    <location>
        <position position="79"/>
    </location>
    <ligand>
        <name>(6S)-5-formyl-5,6,7,8-tetrahydrofolate</name>
        <dbReference type="ChEBI" id="CHEBI:57457"/>
    </ligand>
</feature>
<feature type="binding site" evidence="1">
    <location>
        <position position="119"/>
    </location>
    <ligand>
        <name>(6S)-5-formyl-5,6,7,8-tetrahydrofolate</name>
        <dbReference type="ChEBI" id="CHEBI:57457"/>
    </ligand>
</feature>
<feature type="binding site" evidence="1">
    <location>
        <begin position="225"/>
        <end position="230"/>
    </location>
    <ligand>
        <name>GTP</name>
        <dbReference type="ChEBI" id="CHEBI:37565"/>
    </ligand>
</feature>
<feature type="binding site" evidence="1">
    <location>
        <position position="225"/>
    </location>
    <ligand>
        <name>K(+)</name>
        <dbReference type="ChEBI" id="CHEBI:29103"/>
    </ligand>
</feature>
<feature type="binding site" evidence="1">
    <location>
        <position position="229"/>
    </location>
    <ligand>
        <name>Mg(2+)</name>
        <dbReference type="ChEBI" id="CHEBI:18420"/>
    </ligand>
</feature>
<feature type="binding site" evidence="1">
    <location>
        <begin position="244"/>
        <end position="250"/>
    </location>
    <ligand>
        <name>GTP</name>
        <dbReference type="ChEBI" id="CHEBI:37565"/>
    </ligand>
</feature>
<feature type="binding site" evidence="1">
    <location>
        <position position="244"/>
    </location>
    <ligand>
        <name>K(+)</name>
        <dbReference type="ChEBI" id="CHEBI:29103"/>
    </ligand>
</feature>
<feature type="binding site" evidence="1">
    <location>
        <position position="246"/>
    </location>
    <ligand>
        <name>K(+)</name>
        <dbReference type="ChEBI" id="CHEBI:29103"/>
    </ligand>
</feature>
<feature type="binding site" evidence="1">
    <location>
        <position position="249"/>
    </location>
    <ligand>
        <name>K(+)</name>
        <dbReference type="ChEBI" id="CHEBI:29103"/>
    </ligand>
</feature>
<feature type="binding site" evidence="1">
    <location>
        <position position="250"/>
    </location>
    <ligand>
        <name>Mg(2+)</name>
        <dbReference type="ChEBI" id="CHEBI:18420"/>
    </ligand>
</feature>
<feature type="binding site" evidence="1">
    <location>
        <begin position="269"/>
        <end position="272"/>
    </location>
    <ligand>
        <name>GTP</name>
        <dbReference type="ChEBI" id="CHEBI:37565"/>
    </ligand>
</feature>
<feature type="binding site" evidence="1">
    <location>
        <begin position="334"/>
        <end position="337"/>
    </location>
    <ligand>
        <name>GTP</name>
        <dbReference type="ChEBI" id="CHEBI:37565"/>
    </ligand>
</feature>
<feature type="binding site" evidence="1">
    <location>
        <position position="453"/>
    </location>
    <ligand>
        <name>(6S)-5-formyl-5,6,7,8-tetrahydrofolate</name>
        <dbReference type="ChEBI" id="CHEBI:57457"/>
    </ligand>
</feature>